<organism>
    <name type="scientific">Bacteroides thetaiotaomicron (strain ATCC 29148 / DSM 2079 / JCM 5827 / CCUG 10774 / NCTC 10582 / VPI-5482 / E50)</name>
    <dbReference type="NCBI Taxonomy" id="226186"/>
    <lineage>
        <taxon>Bacteria</taxon>
        <taxon>Pseudomonadati</taxon>
        <taxon>Bacteroidota</taxon>
        <taxon>Bacteroidia</taxon>
        <taxon>Bacteroidales</taxon>
        <taxon>Bacteroidaceae</taxon>
        <taxon>Bacteroides</taxon>
    </lineage>
</organism>
<name>ARGB_BACTN</name>
<proteinExistence type="inferred from homology"/>
<evidence type="ECO:0000255" key="1">
    <source>
        <dbReference type="HAMAP-Rule" id="MF_00082"/>
    </source>
</evidence>
<gene>
    <name evidence="1" type="primary">argB</name>
    <name type="ordered locus">BT_3395</name>
</gene>
<comment type="function">
    <text evidence="1">Catalyzes the ATP-dependent phosphorylation of N-acetyl-L-glutamate.</text>
</comment>
<comment type="catalytic activity">
    <reaction evidence="1">
        <text>N-acetyl-L-glutamate + ATP = N-acetyl-L-glutamyl 5-phosphate + ADP</text>
        <dbReference type="Rhea" id="RHEA:14629"/>
        <dbReference type="ChEBI" id="CHEBI:30616"/>
        <dbReference type="ChEBI" id="CHEBI:44337"/>
        <dbReference type="ChEBI" id="CHEBI:57936"/>
        <dbReference type="ChEBI" id="CHEBI:456216"/>
        <dbReference type="EC" id="2.7.2.8"/>
    </reaction>
</comment>
<comment type="pathway">
    <text evidence="1">Amino-acid biosynthesis; L-arginine biosynthesis; N(2)-acetyl-L-ornithine from L-glutamate: step 2/4.</text>
</comment>
<comment type="subcellular location">
    <subcellularLocation>
        <location evidence="1">Cytoplasm</location>
    </subcellularLocation>
</comment>
<comment type="similarity">
    <text evidence="1">Belongs to the acetylglutamate kinase family. ArgB subfamily.</text>
</comment>
<dbReference type="EC" id="2.7.2.8" evidence="1"/>
<dbReference type="EMBL" id="AE015928">
    <property type="protein sequence ID" value="AAO78501.1"/>
    <property type="molecule type" value="Genomic_DNA"/>
</dbReference>
<dbReference type="RefSeq" id="NP_812307.1">
    <property type="nucleotide sequence ID" value="NC_004663.1"/>
</dbReference>
<dbReference type="RefSeq" id="WP_008767599.1">
    <property type="nucleotide sequence ID" value="NC_004663.1"/>
</dbReference>
<dbReference type="SMR" id="Q8A2B0"/>
<dbReference type="FunCoup" id="Q8A2B0">
    <property type="interactions" value="355"/>
</dbReference>
<dbReference type="STRING" id="226186.BT_3395"/>
<dbReference type="PaxDb" id="226186-BT_3395"/>
<dbReference type="EnsemblBacteria" id="AAO78501">
    <property type="protein sequence ID" value="AAO78501"/>
    <property type="gene ID" value="BT_3395"/>
</dbReference>
<dbReference type="GeneID" id="60924574"/>
<dbReference type="KEGG" id="bth:BT_3395"/>
<dbReference type="PATRIC" id="fig|226186.12.peg.3463"/>
<dbReference type="eggNOG" id="COG0548">
    <property type="taxonomic scope" value="Bacteria"/>
</dbReference>
<dbReference type="HOGENOM" id="CLU_053680_1_0_10"/>
<dbReference type="InParanoid" id="Q8A2B0"/>
<dbReference type="OrthoDB" id="9803155at2"/>
<dbReference type="UniPathway" id="UPA00068">
    <property type="reaction ID" value="UER00107"/>
</dbReference>
<dbReference type="Proteomes" id="UP000001414">
    <property type="component" value="Chromosome"/>
</dbReference>
<dbReference type="GO" id="GO:0005737">
    <property type="term" value="C:cytoplasm"/>
    <property type="evidence" value="ECO:0007669"/>
    <property type="project" value="UniProtKB-SubCell"/>
</dbReference>
<dbReference type="GO" id="GO:0003991">
    <property type="term" value="F:acetylglutamate kinase activity"/>
    <property type="evidence" value="ECO:0000318"/>
    <property type="project" value="GO_Central"/>
</dbReference>
<dbReference type="GO" id="GO:0005524">
    <property type="term" value="F:ATP binding"/>
    <property type="evidence" value="ECO:0007669"/>
    <property type="project" value="UniProtKB-UniRule"/>
</dbReference>
<dbReference type="GO" id="GO:0042450">
    <property type="term" value="P:arginine biosynthetic process via ornithine"/>
    <property type="evidence" value="ECO:0007669"/>
    <property type="project" value="UniProtKB-UniRule"/>
</dbReference>
<dbReference type="GO" id="GO:0006526">
    <property type="term" value="P:L-arginine biosynthetic process"/>
    <property type="evidence" value="ECO:0000318"/>
    <property type="project" value="GO_Central"/>
</dbReference>
<dbReference type="CDD" id="cd04238">
    <property type="entry name" value="AAK_NAGK-like"/>
    <property type="match status" value="1"/>
</dbReference>
<dbReference type="FunFam" id="3.40.1160.10:FF:000055">
    <property type="entry name" value="Acetylglutamate kinase"/>
    <property type="match status" value="1"/>
</dbReference>
<dbReference type="Gene3D" id="3.40.1160.10">
    <property type="entry name" value="Acetylglutamate kinase-like"/>
    <property type="match status" value="1"/>
</dbReference>
<dbReference type="HAMAP" id="MF_00082">
    <property type="entry name" value="ArgB"/>
    <property type="match status" value="1"/>
</dbReference>
<dbReference type="InterPro" id="IPR036393">
    <property type="entry name" value="AceGlu_kinase-like_sf"/>
</dbReference>
<dbReference type="InterPro" id="IPR004662">
    <property type="entry name" value="AcgluKinase_fam"/>
</dbReference>
<dbReference type="InterPro" id="IPR037528">
    <property type="entry name" value="ArgB"/>
</dbReference>
<dbReference type="InterPro" id="IPR001048">
    <property type="entry name" value="Asp/Glu/Uridylate_kinase"/>
</dbReference>
<dbReference type="NCBIfam" id="TIGR00761">
    <property type="entry name" value="argB"/>
    <property type="match status" value="1"/>
</dbReference>
<dbReference type="PANTHER" id="PTHR23342">
    <property type="entry name" value="N-ACETYLGLUTAMATE SYNTHASE"/>
    <property type="match status" value="1"/>
</dbReference>
<dbReference type="PANTHER" id="PTHR23342:SF0">
    <property type="entry name" value="N-ACETYLGLUTAMATE SYNTHASE, MITOCHONDRIAL"/>
    <property type="match status" value="1"/>
</dbReference>
<dbReference type="Pfam" id="PF00696">
    <property type="entry name" value="AA_kinase"/>
    <property type="match status" value="1"/>
</dbReference>
<dbReference type="PIRSF" id="PIRSF000728">
    <property type="entry name" value="NAGK"/>
    <property type="match status" value="1"/>
</dbReference>
<dbReference type="SUPFAM" id="SSF53633">
    <property type="entry name" value="Carbamate kinase-like"/>
    <property type="match status" value="1"/>
</dbReference>
<feature type="chain" id="PRO_0000112588" description="Acetylglutamate kinase">
    <location>
        <begin position="1"/>
        <end position="257"/>
    </location>
</feature>
<feature type="binding site" evidence="1">
    <location>
        <begin position="41"/>
        <end position="42"/>
    </location>
    <ligand>
        <name>substrate</name>
    </ligand>
</feature>
<feature type="binding site" evidence="1">
    <location>
        <position position="63"/>
    </location>
    <ligand>
        <name>substrate</name>
    </ligand>
</feature>
<feature type="binding site" evidence="1">
    <location>
        <position position="158"/>
    </location>
    <ligand>
        <name>substrate</name>
    </ligand>
</feature>
<feature type="site" description="Transition state stabilizer" evidence="1">
    <location>
        <position position="9"/>
    </location>
</feature>
<feature type="site" description="Transition state stabilizer" evidence="1">
    <location>
        <position position="224"/>
    </location>
</feature>
<protein>
    <recommendedName>
        <fullName evidence="1">Acetylglutamate kinase</fullName>
        <ecNumber evidence="1">2.7.2.8</ecNumber>
    </recommendedName>
    <alternativeName>
        <fullName evidence="1">N-acetyl-L-glutamate 5-phosphotransferase</fullName>
    </alternativeName>
    <alternativeName>
        <fullName evidence="1">NAG kinase</fullName>
        <shortName evidence="1">NAGK</shortName>
    </alternativeName>
</protein>
<accession>Q8A2B0</accession>
<sequence length="257" mass="27399">MREKLTVIKVGGKIVEEEATLLQLLNDFAAISGHKVLVHGGGRSATKIAAQLGIESKMVNGRRITDAETLKVVTMVYGGLVNKNIVAGLQARGVNALGLTGADMNVIRSVKRPVKEVDYGFVGDVEKVDASLLADLIHKGVVPVMAPLTHDGQGNMLNTNADTIAGETAKALSALFDVTLVYCFEKKGVLRDENDDDSVIPEITRAEFEQYVADGVIQGGMIPKLENSFEAINAGVTEVVITLASAIKDNEGTRIKK</sequence>
<keyword id="KW-0028">Amino-acid biosynthesis</keyword>
<keyword id="KW-0055">Arginine biosynthesis</keyword>
<keyword id="KW-0067">ATP-binding</keyword>
<keyword id="KW-0963">Cytoplasm</keyword>
<keyword id="KW-0418">Kinase</keyword>
<keyword id="KW-0547">Nucleotide-binding</keyword>
<keyword id="KW-1185">Reference proteome</keyword>
<keyword id="KW-0808">Transferase</keyword>
<reference key="1">
    <citation type="journal article" date="2003" name="Science">
        <title>A genomic view of the human-Bacteroides thetaiotaomicron symbiosis.</title>
        <authorList>
            <person name="Xu J."/>
            <person name="Bjursell M.K."/>
            <person name="Himrod J."/>
            <person name="Deng S."/>
            <person name="Carmichael L.K."/>
            <person name="Chiang H.C."/>
            <person name="Hooper L.V."/>
            <person name="Gordon J.I."/>
        </authorList>
    </citation>
    <scope>NUCLEOTIDE SEQUENCE [LARGE SCALE GENOMIC DNA]</scope>
    <source>
        <strain>ATCC 29148 / DSM 2079 / JCM 5827 / CCUG 10774 / NCTC 10582 / VPI-5482 / E50</strain>
    </source>
</reference>